<feature type="chain" id="PRO_0000054932" description="Telomerase reverse transcriptase">
    <location>
        <begin position="1"/>
        <end position="884"/>
    </location>
</feature>
<feature type="domain" description="Reverse transcriptase" evidence="2">
    <location>
        <begin position="422"/>
        <end position="725"/>
    </location>
</feature>
<feature type="binding site" evidence="2">
    <location>
        <position position="530"/>
    </location>
    <ligand>
        <name>Mg(2+)</name>
        <dbReference type="ChEBI" id="CHEBI:18420"/>
        <note>catalytic</note>
    </ligand>
</feature>
<feature type="binding site" evidence="2">
    <location>
        <position position="670"/>
    </location>
    <ligand>
        <name>Mg(2+)</name>
        <dbReference type="ChEBI" id="CHEBI:18420"/>
        <note>catalytic</note>
    </ligand>
</feature>
<feature type="binding site" evidence="2">
    <location>
        <position position="671"/>
    </location>
    <ligand>
        <name>Mg(2+)</name>
        <dbReference type="ChEBI" id="CHEBI:18420"/>
        <note>catalytic</note>
    </ligand>
</feature>
<feature type="sequence conflict" description="In Ref. 1; AAB64520." evidence="3" ref="1">
    <original>A</original>
    <variation>V</variation>
    <location>
        <position position="162"/>
    </location>
</feature>
<name>TERT_YEAST</name>
<protein>
    <recommendedName>
        <fullName>Telomerase reverse transcriptase</fullName>
        <ecNumber>2.7.7.49</ecNumber>
    </recommendedName>
    <alternativeName>
        <fullName>Telomerase catalytic subunit</fullName>
    </alternativeName>
</protein>
<organism>
    <name type="scientific">Saccharomyces cerevisiae (strain ATCC 204508 / S288c)</name>
    <name type="common">Baker's yeast</name>
    <dbReference type="NCBI Taxonomy" id="559292"/>
    <lineage>
        <taxon>Eukaryota</taxon>
        <taxon>Fungi</taxon>
        <taxon>Dikarya</taxon>
        <taxon>Ascomycota</taxon>
        <taxon>Saccharomycotina</taxon>
        <taxon>Saccharomycetes</taxon>
        <taxon>Saccharomycetales</taxon>
        <taxon>Saccharomycetaceae</taxon>
        <taxon>Saccharomyces</taxon>
    </lineage>
</organism>
<comment type="function">
    <text>Telomerase is a ribonucleoprotein enzyme essential for the replication of chromosome termini in most eukaryotes. It elongates telomeres. It is a reverse transcriptase that adds simple sequence repeats to chromosome ends by copying a template sequence within the RNA component of the enzyme.</text>
</comment>
<comment type="catalytic activity">
    <reaction evidence="2">
        <text>DNA(n) + a 2'-deoxyribonucleoside 5'-triphosphate = DNA(n+1) + diphosphate</text>
        <dbReference type="Rhea" id="RHEA:22508"/>
        <dbReference type="Rhea" id="RHEA-COMP:17339"/>
        <dbReference type="Rhea" id="RHEA-COMP:17340"/>
        <dbReference type="ChEBI" id="CHEBI:33019"/>
        <dbReference type="ChEBI" id="CHEBI:61560"/>
        <dbReference type="ChEBI" id="CHEBI:173112"/>
        <dbReference type="EC" id="2.7.7.49"/>
    </reaction>
</comment>
<comment type="subunit">
    <text evidence="1">Catalytic subunit of the telomerase holoenzyme complex composed minimally of EST2 and the telomerase RNA template component.</text>
</comment>
<comment type="interaction">
    <interactant intactId="EBI-3764464">
        <id>Q06163</id>
    </interactant>
    <interactant intactId="EBI-6684">
        <id>P17214</id>
        <label>EST1</label>
    </interactant>
    <organismsDiffer>false</organismsDiffer>
    <experiments>4</experiments>
</comment>
<comment type="interaction">
    <interactant intactId="EBI-3764464">
        <id>Q06163</id>
    </interactant>
    <interactant intactId="EBI-6691">
        <id>Q03096</id>
        <label>EST3</label>
    </interactant>
    <organismsDiffer>false</organismsDiffer>
    <experiments>3</experiments>
</comment>
<comment type="subcellular location">
    <subcellularLocation>
        <location>Nucleus</location>
    </subcellularLocation>
    <subcellularLocation>
        <location>Chromosome</location>
        <location>Telomere</location>
    </subcellularLocation>
</comment>
<comment type="miscellaneous">
    <text>Deletion causes telomere shortening and senescence.</text>
</comment>
<comment type="similarity">
    <text evidence="3">Belongs to the reverse transcriptase family. Telomerase subfamily.</text>
</comment>
<keyword id="KW-0158">Chromosome</keyword>
<keyword id="KW-0238">DNA-binding</keyword>
<keyword id="KW-0460">Magnesium</keyword>
<keyword id="KW-0479">Metal-binding</keyword>
<keyword id="KW-0548">Nucleotidyltransferase</keyword>
<keyword id="KW-0539">Nucleus</keyword>
<keyword id="KW-1185">Reference proteome</keyword>
<keyword id="KW-0695">RNA-directed DNA polymerase</keyword>
<keyword id="KW-0779">Telomere</keyword>
<keyword id="KW-0808">Transferase</keyword>
<sequence length="884" mass="102635">MKILFEFIQDKLDIDLQTNSTYKENLKCGHFNGLDEILTTCFALPNSRKIALPCLPGDLSHKAVIDHCIIYLLTGELYNNVLTFGYKIARNEDVNNSLFCHSANVNVTLLKGAAWKMFHSLVGTYAFVDLLINYTVIQFNGQFFTQIVGNRCNEPHLPPKWAQRSSSSSATAAQIKQLTEPVTNKQFLHKLNINSSSFFPYSKILPSSSSIKKLTDLREAIFPTNLVKIPQRLKVRINLTLQKLLKRHKRLNYVSILNSICPPLEGTVLDLSHLSRQSPKERVLKFIIVILQKLLPQEMFGSKKNKGKIIKNLNLLLSLPLNGYLPFDSLLKKLRLKDFRWLFISDIWFTKHNFENLNQLAICFISWLFRQLIPKIIQTFFYCTEISSTVTIVYFRHDTWNKLITPFIVEYFKTYLVENNVCRNHNSYTLSNFNHSKMRIIPKKSNNEFRIIAIPCRGADEEEFTIYKENHKNAIQPTQKILEYLRNKRPTSFTKIYSPTQIADRIKEFKQRLLKKFNNVLPELYFMKFDVKSCYDSIPRMECMRILKDALKNENGFFVRSQYFFNTNTGVLKLFNVVNASRVPKPYELYIDNVRTVHLSNQDVINVVEMEIFKTALWVEDKCYIREDGLFQGSSLSAPIVDLVYDDLLEFYSEFKASPSQDTLILKLADDFLIISTDQQQVINIKKLAMGGFQKYNAKANRDKILAVSSQSDDDTVIQFCAMHIFVKELEVWKHSSTMNNFHIRSKSSKGIFRSLIALFNTRISYKTIDTNLNSTNTVLMQIDHVVKNISECYKSAFKDLSINVTQNMQFHSFLQRIIEMTVSGCPITKCDPLIEYEVRFTILNGFLESLSSNTSKFKDNIILLRKEIQHLQAYIYIYIHIVN</sequence>
<reference key="1">
    <citation type="journal article" date="1997" name="Nature">
        <title>The nucleotide sequence of Saccharomyces cerevisiae chromosome XII.</title>
        <authorList>
            <person name="Johnston M."/>
            <person name="Hillier L.W."/>
            <person name="Riles L."/>
            <person name="Albermann K."/>
            <person name="Andre B."/>
            <person name="Ansorge W."/>
            <person name="Benes V."/>
            <person name="Brueckner M."/>
            <person name="Delius H."/>
            <person name="Dubois E."/>
            <person name="Duesterhoeft A."/>
            <person name="Entian K.-D."/>
            <person name="Floeth M."/>
            <person name="Goffeau A."/>
            <person name="Hebling U."/>
            <person name="Heumann K."/>
            <person name="Heuss-Neitzel D."/>
            <person name="Hilbert H."/>
            <person name="Hilger F."/>
            <person name="Kleine K."/>
            <person name="Koetter P."/>
            <person name="Louis E.J."/>
            <person name="Messenguy F."/>
            <person name="Mewes H.-W."/>
            <person name="Miosga T."/>
            <person name="Moestl D."/>
            <person name="Mueller-Auer S."/>
            <person name="Nentwich U."/>
            <person name="Obermaier B."/>
            <person name="Piravandi E."/>
            <person name="Pohl T.M."/>
            <person name="Portetelle D."/>
            <person name="Purnelle B."/>
            <person name="Rechmann S."/>
            <person name="Rieger M."/>
            <person name="Rinke M."/>
            <person name="Rose M."/>
            <person name="Scharfe M."/>
            <person name="Scherens B."/>
            <person name="Scholler P."/>
            <person name="Schwager C."/>
            <person name="Schwarz S."/>
            <person name="Underwood A.P."/>
            <person name="Urrestarazu L.A."/>
            <person name="Vandenbol M."/>
            <person name="Verhasselt P."/>
            <person name="Vierendeels F."/>
            <person name="Voet M."/>
            <person name="Volckaert G."/>
            <person name="Voss H."/>
            <person name="Wambutt R."/>
            <person name="Wedler E."/>
            <person name="Wedler H."/>
            <person name="Zimmermann F.K."/>
            <person name="Zollner A."/>
            <person name="Hani J."/>
            <person name="Hoheisel J.D."/>
        </authorList>
    </citation>
    <scope>NUCLEOTIDE SEQUENCE [LARGE SCALE GENOMIC DNA]</scope>
    <source>
        <strain>ATCC 204508 / S288c</strain>
    </source>
</reference>
<reference key="2">
    <citation type="journal article" date="2014" name="G3 (Bethesda)">
        <title>The reference genome sequence of Saccharomyces cerevisiae: Then and now.</title>
        <authorList>
            <person name="Engel S.R."/>
            <person name="Dietrich F.S."/>
            <person name="Fisk D.G."/>
            <person name="Binkley G."/>
            <person name="Balakrishnan R."/>
            <person name="Costanzo M.C."/>
            <person name="Dwight S.S."/>
            <person name="Hitz B.C."/>
            <person name="Karra K."/>
            <person name="Nash R.S."/>
            <person name="Weng S."/>
            <person name="Wong E.D."/>
            <person name="Lloyd P."/>
            <person name="Skrzypek M.S."/>
            <person name="Miyasato S.R."/>
            <person name="Simison M."/>
            <person name="Cherry J.M."/>
        </authorList>
    </citation>
    <scope>GENOME REANNOTATION</scope>
    <scope>SEQUENCE REVISION TO 162</scope>
    <source>
        <strain>ATCC 204508 / S288c</strain>
    </source>
</reference>
<reference key="3">
    <citation type="journal article" date="1997" name="Science">
        <title>Reverse transcriptase motifs in the catalytic subunit of telomerase.</title>
        <authorList>
            <person name="Lingner J."/>
            <person name="Hughes T.R."/>
            <person name="Shevchenko A."/>
            <person name="Mann M."/>
            <person name="Lundblad V."/>
            <person name="Cech T.R."/>
        </authorList>
    </citation>
    <scope>CHARACTERIZATION</scope>
</reference>
<evidence type="ECO:0000250" key="1">
    <source>
        <dbReference type="UniProtKB" id="O13339"/>
    </source>
</evidence>
<evidence type="ECO:0000255" key="2">
    <source>
        <dbReference type="PROSITE-ProRule" id="PRU00405"/>
    </source>
</evidence>
<evidence type="ECO:0000305" key="3"/>
<proteinExistence type="evidence at protein level"/>
<gene>
    <name type="primary">EST2</name>
    <name type="ordered locus">YLR318W</name>
    <name type="ORF">L8543.12</name>
</gene>
<dbReference type="EC" id="2.7.7.49"/>
<dbReference type="EMBL" id="U20618">
    <property type="protein sequence ID" value="AAB64520.1"/>
    <property type="molecule type" value="Genomic_DNA"/>
</dbReference>
<dbReference type="EMBL" id="BK006945">
    <property type="protein sequence ID" value="DAA09627.2"/>
    <property type="molecule type" value="Genomic_DNA"/>
</dbReference>
<dbReference type="PIR" id="S53396">
    <property type="entry name" value="S53396"/>
</dbReference>
<dbReference type="RefSeq" id="NP_013422.2">
    <property type="nucleotide sequence ID" value="NM_001182207.2"/>
</dbReference>
<dbReference type="SMR" id="Q06163"/>
<dbReference type="BioGRID" id="31582">
    <property type="interactions" value="101"/>
</dbReference>
<dbReference type="ComplexPortal" id="CPX-3298">
    <property type="entry name" value="Telomerase holoenzyme complex"/>
</dbReference>
<dbReference type="DIP" id="DIP-7548N"/>
<dbReference type="FunCoup" id="Q06163">
    <property type="interactions" value="398"/>
</dbReference>
<dbReference type="IntAct" id="Q06163">
    <property type="interactions" value="7"/>
</dbReference>
<dbReference type="MINT" id="Q06163"/>
<dbReference type="STRING" id="4932.YLR318W"/>
<dbReference type="CarbonylDB" id="Q06163"/>
<dbReference type="iPTMnet" id="Q06163"/>
<dbReference type="PaxDb" id="4932-YLR318W"/>
<dbReference type="PeptideAtlas" id="Q06163"/>
<dbReference type="EnsemblFungi" id="YLR318W_mRNA">
    <property type="protein sequence ID" value="YLR318W"/>
    <property type="gene ID" value="YLR318W"/>
</dbReference>
<dbReference type="GeneID" id="851028"/>
<dbReference type="KEGG" id="sce:YLR318W"/>
<dbReference type="AGR" id="SGD:S000004310"/>
<dbReference type="SGD" id="S000004310">
    <property type="gene designation" value="EST2"/>
</dbReference>
<dbReference type="VEuPathDB" id="FungiDB:YLR318W"/>
<dbReference type="eggNOG" id="KOG1005">
    <property type="taxonomic scope" value="Eukaryota"/>
</dbReference>
<dbReference type="GeneTree" id="ENSGT00390000018531"/>
<dbReference type="HOGENOM" id="CLU_012565_0_0_1"/>
<dbReference type="InParanoid" id="Q06163"/>
<dbReference type="OMA" id="CYDSIPR"/>
<dbReference type="OrthoDB" id="289721at2759"/>
<dbReference type="BioCyc" id="YEAST:G3O-32402-MONOMER"/>
<dbReference type="BioGRID-ORCS" id="851028">
    <property type="hits" value="0 hits in 10 CRISPR screens"/>
</dbReference>
<dbReference type="PRO" id="PR:Q06163"/>
<dbReference type="Proteomes" id="UP000002311">
    <property type="component" value="Chromosome XII"/>
</dbReference>
<dbReference type="RNAct" id="Q06163">
    <property type="molecule type" value="protein"/>
</dbReference>
<dbReference type="GO" id="GO:0000781">
    <property type="term" value="C:chromosome, telomeric region"/>
    <property type="evidence" value="ECO:0007669"/>
    <property type="project" value="UniProtKB-SubCell"/>
</dbReference>
<dbReference type="GO" id="GO:0005730">
    <property type="term" value="C:nucleolus"/>
    <property type="evidence" value="ECO:0000314"/>
    <property type="project" value="SGD"/>
</dbReference>
<dbReference type="GO" id="GO:0005634">
    <property type="term" value="C:nucleus"/>
    <property type="evidence" value="ECO:0000314"/>
    <property type="project" value="SGD"/>
</dbReference>
<dbReference type="GO" id="GO:0000333">
    <property type="term" value="C:telomerase catalytic core complex"/>
    <property type="evidence" value="ECO:0000314"/>
    <property type="project" value="SGD"/>
</dbReference>
<dbReference type="GO" id="GO:0005697">
    <property type="term" value="C:telomerase holoenzyme complex"/>
    <property type="evidence" value="ECO:0000314"/>
    <property type="project" value="SGD"/>
</dbReference>
<dbReference type="GO" id="GO:0046872">
    <property type="term" value="F:metal ion binding"/>
    <property type="evidence" value="ECO:0007669"/>
    <property type="project" value="UniProtKB-KW"/>
</dbReference>
<dbReference type="GO" id="GO:0003720">
    <property type="term" value="F:telomerase activity"/>
    <property type="evidence" value="ECO:0000315"/>
    <property type="project" value="SGD"/>
</dbReference>
<dbReference type="GO" id="GO:0070034">
    <property type="term" value="F:telomerase RNA binding"/>
    <property type="evidence" value="ECO:0000318"/>
    <property type="project" value="GO_Central"/>
</dbReference>
<dbReference type="GO" id="GO:0042162">
    <property type="term" value="F:telomeric DNA binding"/>
    <property type="evidence" value="ECO:0000314"/>
    <property type="project" value="SGD"/>
</dbReference>
<dbReference type="GO" id="GO:0007004">
    <property type="term" value="P:telomere maintenance via telomerase"/>
    <property type="evidence" value="ECO:0000314"/>
    <property type="project" value="SGD"/>
</dbReference>
<dbReference type="CDD" id="cd01648">
    <property type="entry name" value="TERT"/>
    <property type="match status" value="1"/>
</dbReference>
<dbReference type="Gene3D" id="1.10.132.70">
    <property type="match status" value="1"/>
</dbReference>
<dbReference type="InterPro" id="IPR000477">
    <property type="entry name" value="RT_dom"/>
</dbReference>
<dbReference type="InterPro" id="IPR021891">
    <property type="entry name" value="Telomerase_RBD"/>
</dbReference>
<dbReference type="InterPro" id="IPR003545">
    <property type="entry name" value="Telomerase_RT"/>
</dbReference>
<dbReference type="PANTHER" id="PTHR12066">
    <property type="entry name" value="TELOMERASE REVERSE TRANSCRIPTASE"/>
    <property type="match status" value="1"/>
</dbReference>
<dbReference type="PANTHER" id="PTHR12066:SF0">
    <property type="entry name" value="TELOMERASE REVERSE TRANSCRIPTASE"/>
    <property type="match status" value="1"/>
</dbReference>
<dbReference type="Pfam" id="PF00078">
    <property type="entry name" value="RVT_1"/>
    <property type="match status" value="1"/>
</dbReference>
<dbReference type="Pfam" id="PF12009">
    <property type="entry name" value="Telomerase_RBD"/>
    <property type="match status" value="1"/>
</dbReference>
<dbReference type="PRINTS" id="PR01365">
    <property type="entry name" value="TELOMERASERT"/>
</dbReference>
<dbReference type="SMART" id="SM00975">
    <property type="entry name" value="Telomerase_RBD"/>
    <property type="match status" value="1"/>
</dbReference>
<dbReference type="PROSITE" id="PS50878">
    <property type="entry name" value="RT_POL"/>
    <property type="match status" value="1"/>
</dbReference>
<accession>Q06163</accession>
<accession>D6VYW1</accession>